<reference key="1">
    <citation type="journal article" date="2004" name="Proc. Natl. Acad. Sci. U.S.A.">
        <title>Genome sequence of the enterobacterial phytopathogen Erwinia carotovora subsp. atroseptica and characterization of virulence factors.</title>
        <authorList>
            <person name="Bell K.S."/>
            <person name="Sebaihia M."/>
            <person name="Pritchard L."/>
            <person name="Holden M.T.G."/>
            <person name="Hyman L.J."/>
            <person name="Holeva M.C."/>
            <person name="Thomson N.R."/>
            <person name="Bentley S.D."/>
            <person name="Churcher L.J.C."/>
            <person name="Mungall K."/>
            <person name="Atkin R."/>
            <person name="Bason N."/>
            <person name="Brooks K."/>
            <person name="Chillingworth T."/>
            <person name="Clark K."/>
            <person name="Doggett J."/>
            <person name="Fraser A."/>
            <person name="Hance Z."/>
            <person name="Hauser H."/>
            <person name="Jagels K."/>
            <person name="Moule S."/>
            <person name="Norbertczak H."/>
            <person name="Ormond D."/>
            <person name="Price C."/>
            <person name="Quail M.A."/>
            <person name="Sanders M."/>
            <person name="Walker D."/>
            <person name="Whitehead S."/>
            <person name="Salmond G.P.C."/>
            <person name="Birch P.R.J."/>
            <person name="Parkhill J."/>
            <person name="Toth I.K."/>
        </authorList>
    </citation>
    <scope>NUCLEOTIDE SEQUENCE [LARGE SCALE GENOMIC DNA]</scope>
    <source>
        <strain>SCRI 1043 / ATCC BAA-672</strain>
    </source>
</reference>
<keyword id="KW-0067">ATP-binding</keyword>
<keyword id="KW-0143">Chaperone</keyword>
<keyword id="KW-0547">Nucleotide-binding</keyword>
<keyword id="KW-0597">Phosphoprotein</keyword>
<keyword id="KW-1185">Reference proteome</keyword>
<keyword id="KW-0346">Stress response</keyword>
<dbReference type="EMBL" id="BX950851">
    <property type="protein sequence ID" value="CAG76780.1"/>
    <property type="molecule type" value="Genomic_DNA"/>
</dbReference>
<dbReference type="RefSeq" id="WP_011095380.1">
    <property type="nucleotide sequence ID" value="NC_004547.2"/>
</dbReference>
<dbReference type="SMR" id="Q6D0B7"/>
<dbReference type="STRING" id="218491.ECA3882"/>
<dbReference type="KEGG" id="eca:ECA3882"/>
<dbReference type="PATRIC" id="fig|218491.5.peg.3939"/>
<dbReference type="eggNOG" id="COG0443">
    <property type="taxonomic scope" value="Bacteria"/>
</dbReference>
<dbReference type="HOGENOM" id="CLU_005965_2_1_6"/>
<dbReference type="OrthoDB" id="9766019at2"/>
<dbReference type="Proteomes" id="UP000007966">
    <property type="component" value="Chromosome"/>
</dbReference>
<dbReference type="GO" id="GO:0005524">
    <property type="term" value="F:ATP binding"/>
    <property type="evidence" value="ECO:0007669"/>
    <property type="project" value="UniProtKB-UniRule"/>
</dbReference>
<dbReference type="GO" id="GO:0140662">
    <property type="term" value="F:ATP-dependent protein folding chaperone"/>
    <property type="evidence" value="ECO:0007669"/>
    <property type="project" value="InterPro"/>
</dbReference>
<dbReference type="GO" id="GO:0051082">
    <property type="term" value="F:unfolded protein binding"/>
    <property type="evidence" value="ECO:0007669"/>
    <property type="project" value="InterPro"/>
</dbReference>
<dbReference type="CDD" id="cd10234">
    <property type="entry name" value="ASKHA_NBD_HSP70_DnaK-like"/>
    <property type="match status" value="1"/>
</dbReference>
<dbReference type="FunFam" id="2.60.34.10:FF:000014">
    <property type="entry name" value="Chaperone protein DnaK HSP70"/>
    <property type="match status" value="1"/>
</dbReference>
<dbReference type="FunFam" id="3.30.30.30:FF:000003">
    <property type="entry name" value="Heat shock protein 9"/>
    <property type="match status" value="1"/>
</dbReference>
<dbReference type="FunFam" id="1.20.1270.10:FF:000001">
    <property type="entry name" value="Molecular chaperone DnaK"/>
    <property type="match status" value="1"/>
</dbReference>
<dbReference type="FunFam" id="3.30.420.40:FF:000004">
    <property type="entry name" value="Molecular chaperone DnaK"/>
    <property type="match status" value="1"/>
</dbReference>
<dbReference type="FunFam" id="3.90.640.10:FF:000003">
    <property type="entry name" value="Molecular chaperone DnaK"/>
    <property type="match status" value="1"/>
</dbReference>
<dbReference type="Gene3D" id="1.20.1270.10">
    <property type="match status" value="1"/>
</dbReference>
<dbReference type="Gene3D" id="3.30.420.40">
    <property type="match status" value="2"/>
</dbReference>
<dbReference type="Gene3D" id="3.90.640.10">
    <property type="entry name" value="Actin, Chain A, domain 4"/>
    <property type="match status" value="1"/>
</dbReference>
<dbReference type="Gene3D" id="2.60.34.10">
    <property type="entry name" value="Substrate Binding Domain Of DNAk, Chain A, domain 1"/>
    <property type="match status" value="1"/>
</dbReference>
<dbReference type="HAMAP" id="MF_00332">
    <property type="entry name" value="DnaK"/>
    <property type="match status" value="1"/>
</dbReference>
<dbReference type="InterPro" id="IPR043129">
    <property type="entry name" value="ATPase_NBD"/>
</dbReference>
<dbReference type="InterPro" id="IPR012725">
    <property type="entry name" value="Chaperone_DnaK"/>
</dbReference>
<dbReference type="InterPro" id="IPR018181">
    <property type="entry name" value="Heat_shock_70_CS"/>
</dbReference>
<dbReference type="InterPro" id="IPR029048">
    <property type="entry name" value="HSP70_C_sf"/>
</dbReference>
<dbReference type="InterPro" id="IPR029047">
    <property type="entry name" value="HSP70_peptide-bd_sf"/>
</dbReference>
<dbReference type="InterPro" id="IPR013126">
    <property type="entry name" value="Hsp_70_fam"/>
</dbReference>
<dbReference type="NCBIfam" id="NF001413">
    <property type="entry name" value="PRK00290.1"/>
    <property type="match status" value="1"/>
</dbReference>
<dbReference type="NCBIfam" id="NF003520">
    <property type="entry name" value="PRK05183.1"/>
    <property type="match status" value="1"/>
</dbReference>
<dbReference type="NCBIfam" id="TIGR02350">
    <property type="entry name" value="prok_dnaK"/>
    <property type="match status" value="1"/>
</dbReference>
<dbReference type="PANTHER" id="PTHR19375">
    <property type="entry name" value="HEAT SHOCK PROTEIN 70KDA"/>
    <property type="match status" value="1"/>
</dbReference>
<dbReference type="Pfam" id="PF00012">
    <property type="entry name" value="HSP70"/>
    <property type="match status" value="1"/>
</dbReference>
<dbReference type="PRINTS" id="PR00301">
    <property type="entry name" value="HEATSHOCK70"/>
</dbReference>
<dbReference type="SUPFAM" id="SSF53067">
    <property type="entry name" value="Actin-like ATPase domain"/>
    <property type="match status" value="2"/>
</dbReference>
<dbReference type="SUPFAM" id="SSF100934">
    <property type="entry name" value="Heat shock protein 70kD (HSP70), C-terminal subdomain"/>
    <property type="match status" value="1"/>
</dbReference>
<dbReference type="SUPFAM" id="SSF100920">
    <property type="entry name" value="Heat shock protein 70kD (HSP70), peptide-binding domain"/>
    <property type="match status" value="1"/>
</dbReference>
<dbReference type="PROSITE" id="PS00297">
    <property type="entry name" value="HSP70_1"/>
    <property type="match status" value="1"/>
</dbReference>
<dbReference type="PROSITE" id="PS00329">
    <property type="entry name" value="HSP70_2"/>
    <property type="match status" value="1"/>
</dbReference>
<dbReference type="PROSITE" id="PS01036">
    <property type="entry name" value="HSP70_3"/>
    <property type="match status" value="1"/>
</dbReference>
<organism>
    <name type="scientific">Pectobacterium atrosepticum (strain SCRI 1043 / ATCC BAA-672)</name>
    <name type="common">Erwinia carotovora subsp. atroseptica</name>
    <dbReference type="NCBI Taxonomy" id="218491"/>
    <lineage>
        <taxon>Bacteria</taxon>
        <taxon>Pseudomonadati</taxon>
        <taxon>Pseudomonadota</taxon>
        <taxon>Gammaproteobacteria</taxon>
        <taxon>Enterobacterales</taxon>
        <taxon>Pectobacteriaceae</taxon>
        <taxon>Pectobacterium</taxon>
    </lineage>
</organism>
<evidence type="ECO:0000255" key="1">
    <source>
        <dbReference type="HAMAP-Rule" id="MF_00332"/>
    </source>
</evidence>
<evidence type="ECO:0000256" key="2">
    <source>
        <dbReference type="SAM" id="MobiDB-lite"/>
    </source>
</evidence>
<feature type="chain" id="PRO_0000225964" description="Chaperone protein DnaK">
    <location>
        <begin position="1"/>
        <end position="635"/>
    </location>
</feature>
<feature type="region of interest" description="Disordered" evidence="2">
    <location>
        <begin position="600"/>
        <end position="635"/>
    </location>
</feature>
<feature type="modified residue" description="Phosphothreonine; by autocatalysis" evidence="1">
    <location>
        <position position="199"/>
    </location>
</feature>
<proteinExistence type="inferred from homology"/>
<protein>
    <recommendedName>
        <fullName evidence="1">Chaperone protein DnaK</fullName>
    </recommendedName>
    <alternativeName>
        <fullName evidence="1">HSP70</fullName>
    </alternativeName>
    <alternativeName>
        <fullName evidence="1">Heat shock 70 kDa protein</fullName>
    </alternativeName>
    <alternativeName>
        <fullName evidence="1">Heat shock protein 70</fullName>
    </alternativeName>
</protein>
<name>DNAK_PECAS</name>
<comment type="function">
    <text evidence="1">Acts as a chaperone.</text>
</comment>
<comment type="induction">
    <text evidence="1">By stress conditions e.g. heat shock.</text>
</comment>
<comment type="similarity">
    <text evidence="1">Belongs to the heat shock protein 70 family.</text>
</comment>
<sequence>MGKIIGIDLGTTNSCVAIIDGTQVKVLENSEGDRTTPSIIAYTQDGEILVGQPAKRQAVTNPQNTLFAIKRLIGRRFKDEEVQRDSNIMPYKIVAADNGDAWLEVKDQKMAPPQISAEVLKKMKKTAEDYLGETITEAVITVPAYFNDAQRQATKDAGRIAGLEVKRIINEPTAAALAYGLDKEVGNRTIAVYDLGGGTFDISIIEIDEVDGEKTFEVLATNGDTHLGGEDFDNRMINYLVDEFKKEQGFDLRNDPLAMQRLKEAAEKAKIELSSAQQTDVNLPYITADATGPKHLNIKVTRAKLESLVEELVNRSLEPLKVALQDAGLSVSEIQDVILVGGQTRMPLVQKKVADFFGKEPRKDVNPDEAVAIGAAVQGGVLSGDVKDVLLLDVSPLSLGIETMGGVMTALIAKNTTIPTKHSQVFSTAEDNQSAVTIHVLQGERKRAHDNKSLGQFNLDGIQAAPRGMPQIEVTFDIDADGILHVSAKDKNSGREQKITIKASSGLNEEEIQKMVRDAEANAEADRKFEELVQARNQGDHLLHSTRKQLEEVGDKLAADDKTAIDDALKALESALKGEDKAEIEAKIQALVQVSGKLLEASQPQPGAEGAADDASARRDDDVVDAEFEEVKDKK</sequence>
<accession>Q6D0B7</accession>
<gene>
    <name evidence="1" type="primary">dnaK</name>
    <name type="ordered locus">ECA3882</name>
</gene>